<gene>
    <name type="primary">IL16</name>
</gene>
<keyword id="KW-0002">3D-structure</keyword>
<keyword id="KW-0877">Alternative promoter usage</keyword>
<keyword id="KW-0025">Alternative splicing</keyword>
<keyword id="KW-0145">Chemotaxis</keyword>
<keyword id="KW-0202">Cytokine</keyword>
<keyword id="KW-0963">Cytoplasm</keyword>
<keyword id="KW-0903">Direct protein sequencing</keyword>
<keyword id="KW-0945">Host-virus interaction</keyword>
<keyword id="KW-0539">Nucleus</keyword>
<keyword id="KW-0597">Phosphoprotein</keyword>
<keyword id="KW-1267">Proteomics identification</keyword>
<keyword id="KW-1185">Reference proteome</keyword>
<keyword id="KW-0677">Repeat</keyword>
<keyword id="KW-0964">Secreted</keyword>
<keyword id="KW-0804">Transcription</keyword>
<keyword id="KW-0805">Transcription regulation</keyword>
<proteinExistence type="evidence at protein level"/>
<feature type="chain" id="PRO_0000377543" description="Pro-interleukin-16">
    <location>
        <begin position="1"/>
        <end position="1332"/>
    </location>
</feature>
<feature type="chain" id="PRO_0000015412" description="Interleukin-16">
    <location>
        <begin position="1212"/>
        <end position="1332"/>
    </location>
</feature>
<feature type="domain" description="PDZ 1" evidence="2">
    <location>
        <begin position="216"/>
        <end position="302"/>
    </location>
</feature>
<feature type="domain" description="PDZ 2" evidence="2">
    <location>
        <begin position="355"/>
        <end position="440"/>
    </location>
</feature>
<feature type="domain" description="PDZ 3" evidence="2">
    <location>
        <begin position="1112"/>
        <end position="1197"/>
    </location>
</feature>
<feature type="domain" description="PDZ 4" evidence="2">
    <location>
        <begin position="1234"/>
        <end position="1319"/>
    </location>
</feature>
<feature type="region of interest" description="Interaction with GRIN2A" evidence="8">
    <location>
        <begin position="183"/>
        <end position="452"/>
    </location>
</feature>
<feature type="region of interest" description="Disordered" evidence="3">
    <location>
        <begin position="481"/>
        <end position="548"/>
    </location>
</feature>
<feature type="region of interest" description="Disordered" evidence="3">
    <location>
        <begin position="560"/>
        <end position="706"/>
    </location>
</feature>
<feature type="region of interest" description="Disordered" evidence="3">
    <location>
        <begin position="732"/>
        <end position="970"/>
    </location>
</feature>
<feature type="region of interest" description="Disordered" evidence="3">
    <location>
        <begin position="1019"/>
        <end position="1041"/>
    </location>
</feature>
<feature type="region of interest" description="Interaction with HTLV-1 tax">
    <location>
        <begin position="1034"/>
        <end position="1118"/>
    </location>
</feature>
<feature type="region of interest" description="Interaction with PPP1R12A, PPP1R12B and PPP1R12C" evidence="8">
    <location>
        <begin position="1106"/>
        <end position="1202"/>
    </location>
</feature>
<feature type="compositionally biased region" description="Basic and acidic residues" evidence="3">
    <location>
        <begin position="481"/>
        <end position="495"/>
    </location>
</feature>
<feature type="compositionally biased region" description="Low complexity" evidence="3">
    <location>
        <begin position="510"/>
        <end position="519"/>
    </location>
</feature>
<feature type="compositionally biased region" description="Basic and acidic residues" evidence="3">
    <location>
        <begin position="571"/>
        <end position="589"/>
    </location>
</feature>
<feature type="compositionally biased region" description="Basic and acidic residues" evidence="3">
    <location>
        <begin position="605"/>
        <end position="620"/>
    </location>
</feature>
<feature type="compositionally biased region" description="Low complexity" evidence="3">
    <location>
        <begin position="829"/>
        <end position="845"/>
    </location>
</feature>
<feature type="compositionally biased region" description="Polar residues" evidence="3">
    <location>
        <begin position="896"/>
        <end position="909"/>
    </location>
</feature>
<feature type="compositionally biased region" description="Polar residues" evidence="3">
    <location>
        <begin position="1023"/>
        <end position="1041"/>
    </location>
</feature>
<feature type="modified residue" description="Phosphoserine" evidence="18">
    <location>
        <position position="922"/>
    </location>
</feature>
<feature type="splice variant" id="VSP_037458" description="In isoform 3 and isoform 4." evidence="15 16">
    <location>
        <begin position="1"/>
        <end position="701"/>
    </location>
</feature>
<feature type="splice variant" id="VSP_037459" description="In isoform 2 and isoform 4." evidence="13 14 15">
    <location>
        <position position="1228"/>
    </location>
</feature>
<feature type="splice variant" id="VSP_057192" description="In isoform 4." evidence="15">
    <original>KMSAGLGFSLEGGKGSLHGDKPLTINRIFKGAASEQSETVQPGDEILQLGGTAMQGLTRFEAWNIIKALPDGPVTIVIRRKSLQSKETTAAGDS</original>
    <variation>DVGRAGLQPGRREGLPTRRQASHH</variation>
    <location>
        <begin position="1239"/>
        <end position="1332"/>
    </location>
</feature>
<feature type="sequence variant" id="VAR_058310" description="In dbSNP:rs4072111.">
    <original>P</original>
    <variation>S</variation>
    <location>
        <position position="434"/>
    </location>
</feature>
<feature type="sequence variant" id="VAR_019203" description="In dbSNP:rs17875512." evidence="12">
    <original>R</original>
    <variation>Q</variation>
    <location>
        <position position="889"/>
    </location>
</feature>
<feature type="sequence variant" id="VAR_019204" description="In dbSNP:rs17875513." evidence="12">
    <original>S</original>
    <variation>L</variation>
    <location>
        <position position="906"/>
    </location>
</feature>
<feature type="sequence variant" id="VAR_034013" description="In dbSNP:rs34101586.">
    <original>S</original>
    <variation>T</variation>
    <location>
        <position position="1027"/>
    </location>
</feature>
<feature type="sequence variant" id="VAR_019205" description="In dbSNP:rs11556218." evidence="12">
    <original>N</original>
    <variation>K</variation>
    <location>
        <position position="1147"/>
    </location>
</feature>
<feature type="sequence variant" id="VAR_053372" description="In dbSNP:rs34159341.">
    <original>H</original>
    <variation>R</variation>
    <location>
        <position position="1176"/>
    </location>
</feature>
<feature type="mutagenesis site" description="Reduces phosphorylation and nuclear localization." evidence="6">
    <original>S</original>
    <variation>A</variation>
    <location>
        <position position="743"/>
    </location>
</feature>
<feature type="mutagenesis site" description="Reduces phosphorylation. Enhances nuclear localization." evidence="6">
    <original>T</original>
    <variation>A</variation>
    <location>
        <position position="757"/>
    </location>
</feature>
<feature type="mutagenesis site" description="Reduces nuclear localization of pro-interleukin-16; when associated with 797-AGLANA-802." evidence="4">
    <original>KK</original>
    <variation>AA</variation>
    <location>
        <begin position="780"/>
        <end position="781"/>
    </location>
</feature>
<feature type="mutagenesis site" description="Reduces nuclear localization of pro-interleukin-16; when associated with 780-AA-781." evidence="4">
    <original>KGLRNR</original>
    <variation>AGLANA</variation>
    <location>
        <begin position="797"/>
        <end position="802"/>
    </location>
</feature>
<feature type="mutagenesis site" description="Abolishes proteolytic cleavage." evidence="11">
    <original>D</original>
    <variation>A</variation>
    <location>
        <position position="1211"/>
    </location>
</feature>
<feature type="sequence conflict" description="In Ref. 1; AAQ86961." evidence="17" ref="1">
    <original>E</original>
    <variation>G</variation>
    <location>
        <position position="273"/>
    </location>
</feature>
<feature type="sequence conflict" description="In Ref. 6; AAI36661." evidence="17" ref="6">
    <original>H</original>
    <variation>R</variation>
    <location>
        <position position="427"/>
    </location>
</feature>
<feature type="sequence conflict" description="In Ref. 1; AAD04636." evidence="17" ref="1">
    <original>D</original>
    <variation>E</variation>
    <location>
        <position position="805"/>
    </location>
</feature>
<feature type="sequence conflict" description="In Ref. 1; AAD04636." evidence="17" ref="1">
    <original>L</original>
    <variation>F</variation>
    <location>
        <position position="934"/>
    </location>
</feature>
<feature type="sequence conflict" description="In Ref. 5." evidence="17" ref="5">
    <original>LRL</original>
    <variation>PRE</variation>
    <location>
        <begin position="942"/>
        <end position="944"/>
    </location>
</feature>
<feature type="sequence conflict" description="In Ref. 1; AAD04636." evidence="17" ref="1">
    <original>E</original>
    <variation>A</variation>
    <location>
        <position position="1020"/>
    </location>
</feature>
<feature type="strand" evidence="20">
    <location>
        <begin position="1111"/>
        <end position="1117"/>
    </location>
</feature>
<feature type="strand" evidence="20">
    <location>
        <begin position="1125"/>
        <end position="1129"/>
    </location>
</feature>
<feature type="strand" evidence="20">
    <location>
        <begin position="1132"/>
        <end position="1135"/>
    </location>
</feature>
<feature type="strand" evidence="20">
    <location>
        <begin position="1140"/>
        <end position="1144"/>
    </location>
</feature>
<feature type="strand" evidence="20">
    <location>
        <begin position="1146"/>
        <end position="1148"/>
    </location>
</feature>
<feature type="helix" evidence="20">
    <location>
        <begin position="1149"/>
        <end position="1153"/>
    </location>
</feature>
<feature type="helix" evidence="20">
    <location>
        <begin position="1175"/>
        <end position="1184"/>
    </location>
</feature>
<feature type="strand" evidence="20">
    <location>
        <begin position="1187"/>
        <end position="1196"/>
    </location>
</feature>
<feature type="strand" evidence="20">
    <location>
        <begin position="1200"/>
        <end position="1202"/>
    </location>
</feature>
<feature type="strand" evidence="19">
    <location>
        <begin position="1209"/>
        <end position="1212"/>
    </location>
</feature>
<feature type="strand" evidence="21">
    <location>
        <begin position="1230"/>
        <end position="1239"/>
    </location>
</feature>
<feature type="strand" evidence="19">
    <location>
        <begin position="1241"/>
        <end position="1243"/>
    </location>
</feature>
<feature type="strand" evidence="21">
    <location>
        <begin position="1244"/>
        <end position="1254"/>
    </location>
</feature>
<feature type="strand" evidence="21">
    <location>
        <begin position="1257"/>
        <end position="1266"/>
    </location>
</feature>
<feature type="strand" evidence="19">
    <location>
        <begin position="1273"/>
        <end position="1275"/>
    </location>
</feature>
<feature type="strand" evidence="21">
    <location>
        <begin position="1283"/>
        <end position="1287"/>
    </location>
</feature>
<feature type="helix" evidence="19">
    <location>
        <begin position="1292"/>
        <end position="1294"/>
    </location>
</feature>
<feature type="helix" evidence="21">
    <location>
        <begin position="1297"/>
        <end position="1306"/>
    </location>
</feature>
<feature type="strand" evidence="21">
    <location>
        <begin position="1309"/>
        <end position="1319"/>
    </location>
</feature>
<protein>
    <recommendedName>
        <fullName>Pro-interleukin-16</fullName>
    </recommendedName>
    <component>
        <recommendedName>
            <fullName>Interleukin-16</fullName>
            <shortName>IL-16</shortName>
        </recommendedName>
        <alternativeName>
            <fullName>Lymphocyte chemoattractant factor</fullName>
            <shortName>LCF</shortName>
        </alternativeName>
    </component>
</protein>
<organism>
    <name type="scientific">Homo sapiens</name>
    <name type="common">Human</name>
    <dbReference type="NCBI Taxonomy" id="9606"/>
    <lineage>
        <taxon>Eukaryota</taxon>
        <taxon>Metazoa</taxon>
        <taxon>Chordata</taxon>
        <taxon>Craniata</taxon>
        <taxon>Vertebrata</taxon>
        <taxon>Euteleostomi</taxon>
        <taxon>Mammalia</taxon>
        <taxon>Eutheria</taxon>
        <taxon>Euarchontoglires</taxon>
        <taxon>Primates</taxon>
        <taxon>Haplorrhini</taxon>
        <taxon>Catarrhini</taxon>
        <taxon>Hominidae</taxon>
        <taxon>Homo</taxon>
    </lineage>
</organism>
<comment type="function">
    <text>Interleukin-16 stimulates a migratory response in CD4+ lymphocytes, monocytes, and eosinophils. Primes CD4+ T-cells for IL-2 and IL-15 responsiveness. Also induces T-lymphocyte expression of interleukin 2 receptor. Ligand for CD4.</text>
</comment>
<comment type="function">
    <molecule>Isoform 1</molecule>
    <text>May act as a scaffolding protein that anchors ion channels in the membrane.</text>
</comment>
<comment type="function">
    <text>Isoform 3 is involved in cell cycle progression in T-cells. Appears to be involved in transcriptional regulation of SKP2 and is probably part of a transcriptional repression complex on the core promoter of the SKP2 gene. May act as a scaffold for GABPB1 (the DNA-binding subunit the GABP transcription factor complex) and HDAC3 thus maintaining transcriptional repression and blocking cell cycle progression in resting T-cells.</text>
</comment>
<comment type="subunit">
    <text evidence="1 8 9 10 17">Homotetramer (Probable). According to PubMed:9699630, the formation of a homotetrameric protein complex is not required for the chemo-attractant function. Isoform 3 interacts (via PDZ 3 domain) with PPP1R12A, PPP1R12B and PPP1R12C. Isoform 1 interacts with PPP1R12B. Isoform 3 interacts with GRIN2A. Isoform 3 interacts with GABPB1. Isoform 3 interacts (via PDZ 3 domain) with HDAC3. Isoform 1 interacts with GRIN2D, KCNJ10, KCNJ15 and CACNA1C (By similarity).</text>
</comment>
<comment type="subunit">
    <text evidence="7">(Microbial infection) Isoform 3 interacts with HTLV-1 tax.</text>
</comment>
<comment type="interaction">
    <interactant intactId="EBI-17178971">
        <id>Q14005-2</id>
    </interactant>
    <interactant intactId="EBI-352541">
        <id>P08133</id>
        <label>ANXA6</label>
    </interactant>
    <organismsDiffer>false</organismsDiffer>
    <experiments>3</experiments>
</comment>
<comment type="interaction">
    <interactant intactId="EBI-17178971">
        <id>Q14005-2</id>
    </interactant>
    <interactant intactId="EBI-11954292">
        <id>Q86V38</id>
        <label>ATN1</label>
    </interactant>
    <organismsDiffer>false</organismsDiffer>
    <experiments>3</experiments>
</comment>
<comment type="interaction">
    <interactant intactId="EBI-17178971">
        <id>Q14005-2</id>
    </interactant>
    <interactant intactId="EBI-10988864">
        <id>P46379-2</id>
        <label>BAG6</label>
    </interactant>
    <organismsDiffer>false</organismsDiffer>
    <experiments>3</experiments>
</comment>
<comment type="interaction">
    <interactant intactId="EBI-17178971">
        <id>Q14005-2</id>
    </interactant>
    <interactant intactId="EBI-2548012">
        <id>Q9H2G9</id>
        <label>BLZF1</label>
    </interactant>
    <organismsDiffer>false</organismsDiffer>
    <experiments>3</experiments>
</comment>
<comment type="interaction">
    <interactant intactId="EBI-17178971">
        <id>Q14005-2</id>
    </interactant>
    <interactant intactId="EBI-12006120">
        <id>A0A087WZT3</id>
        <label>BOLA2-SMG1P6</label>
    </interactant>
    <organismsDiffer>false</organismsDiffer>
    <experiments>3</experiments>
</comment>
<comment type="interaction">
    <interactant intactId="EBI-17178971">
        <id>Q14005-2</id>
    </interactant>
    <interactant intactId="EBI-739580">
        <id>Q13137</id>
        <label>CALCOCO2</label>
    </interactant>
    <organismsDiffer>false</organismsDiffer>
    <experiments>3</experiments>
</comment>
<comment type="interaction">
    <interactant intactId="EBI-17178971">
        <id>Q14005-2</id>
    </interactant>
    <interactant intactId="EBI-6380130">
        <id>Q14012</id>
        <label>CAMK1</label>
    </interactant>
    <organismsDiffer>false</organismsDiffer>
    <experiments>3</experiments>
</comment>
<comment type="interaction">
    <interactant intactId="EBI-17178971">
        <id>Q14005-2</id>
    </interactant>
    <interactant intactId="EBI-3866279">
        <id>Q9BWT7</id>
        <label>CARD10</label>
    </interactant>
    <organismsDiffer>false</organismsDiffer>
    <experiments>3</experiments>
</comment>
<comment type="interaction">
    <interactant intactId="EBI-17178971">
        <id>Q14005-2</id>
    </interactant>
    <interactant intactId="EBI-10179526">
        <id>Q52MB2</id>
        <label>CCDC184</label>
    </interactant>
    <organismsDiffer>false</organismsDiffer>
    <experiments>3</experiments>
</comment>
<comment type="interaction">
    <interactant intactId="EBI-17178971">
        <id>Q14005-2</id>
    </interactant>
    <interactant intactId="EBI-739498">
        <id>Q9P209</id>
        <label>CEP72</label>
    </interactant>
    <organismsDiffer>false</organismsDiffer>
    <experiments>3</experiments>
</comment>
<comment type="interaction">
    <interactant intactId="EBI-17178971">
        <id>Q14005-2</id>
    </interactant>
    <interactant intactId="EBI-21553822">
        <id>Q96A83-2</id>
        <label>COL26A1</label>
    </interactant>
    <organismsDiffer>false</organismsDiffer>
    <experiments>3</experiments>
</comment>
<comment type="interaction">
    <interactant intactId="EBI-17178971">
        <id>Q14005-2</id>
    </interactant>
    <interactant intactId="EBI-6875961">
        <id>P02489</id>
        <label>CRYAA</label>
    </interactant>
    <organismsDiffer>false</organismsDiffer>
    <experiments>3</experiments>
</comment>
<comment type="interaction">
    <interactant intactId="EBI-17178971">
        <id>Q14005-2</id>
    </interactant>
    <interactant intactId="EBI-3867333">
        <id>A8MQ03</id>
        <label>CYSRT1</label>
    </interactant>
    <organismsDiffer>false</organismsDiffer>
    <experiments>3</experiments>
</comment>
<comment type="interaction">
    <interactant intactId="EBI-17178971">
        <id>Q14005-2</id>
    </interactant>
    <interactant intactId="EBI-10976677">
        <id>G5E9A7</id>
        <label>DMWD</label>
    </interactant>
    <organismsDiffer>false</organismsDiffer>
    <experiments>3</experiments>
</comment>
<comment type="interaction">
    <interactant intactId="EBI-17178971">
        <id>Q14005-2</id>
    </interactant>
    <interactant intactId="EBI-1265847">
        <id>Q16829</id>
        <label>DUSP7</label>
    </interactant>
    <organismsDiffer>false</organismsDiffer>
    <experiments>3</experiments>
</comment>
<comment type="interaction">
    <interactant intactId="EBI-17178971">
        <id>Q14005-2</id>
    </interactant>
    <interactant intactId="EBI-356015">
        <id>Q14204</id>
        <label>DYNC1H1</label>
    </interactant>
    <organismsDiffer>false</organismsDiffer>
    <experiments>3</experiments>
</comment>
<comment type="interaction">
    <interactant intactId="EBI-17178971">
        <id>Q14005-2</id>
    </interactant>
    <interactant intactId="EBI-743414">
        <id>O95967</id>
        <label>EFEMP2</label>
    </interactant>
    <organismsDiffer>false</organismsDiffer>
    <experiments>3</experiments>
</comment>
<comment type="interaction">
    <interactant intactId="EBI-17178971">
        <id>Q14005-2</id>
    </interactant>
    <interactant intactId="EBI-2565863">
        <id>P00488</id>
        <label>F13A1</label>
    </interactant>
    <organismsDiffer>false</organismsDiffer>
    <experiments>3</experiments>
</comment>
<comment type="interaction">
    <interactant intactId="EBI-17178971">
        <id>Q14005-2</id>
    </interactant>
    <interactant intactId="EBI-744506">
        <id>Q86V42</id>
        <label>FAM124A</label>
    </interactant>
    <organismsDiffer>false</organismsDiffer>
    <experiments>7</experiments>
</comment>
<comment type="interaction">
    <interactant intactId="EBI-17178971">
        <id>Q14005-2</id>
    </interactant>
    <interactant intactId="EBI-701903">
        <id>Q14192</id>
        <label>FHL2</label>
    </interactant>
    <organismsDiffer>false</organismsDiffer>
    <experiments>3</experiments>
</comment>
<comment type="interaction">
    <interactant intactId="EBI-17178971">
        <id>Q14005-2</id>
    </interactant>
    <interactant intactId="EBI-750641">
        <id>Q5TD97</id>
        <label>FHL5</label>
    </interactant>
    <organismsDiffer>false</organismsDiffer>
    <experiments>5</experiments>
</comment>
<comment type="interaction">
    <interactant intactId="EBI-17178971">
        <id>Q14005-2</id>
    </interactant>
    <interactant intactId="EBI-18138793">
        <id>Q9C0B1-2</id>
        <label>FTO</label>
    </interactant>
    <organismsDiffer>false</organismsDiffer>
    <experiments>3</experiments>
</comment>
<comment type="interaction">
    <interactant intactId="EBI-17178971">
        <id>Q14005-2</id>
    </interactant>
    <interactant intactId="EBI-618165">
        <id>Q06547</id>
        <label>GABPB1</label>
    </interactant>
    <organismsDiffer>false</organismsDiffer>
    <experiments>3</experiments>
</comment>
<comment type="interaction">
    <interactant intactId="EBI-17178971">
        <id>Q14005-2</id>
    </interactant>
    <interactant intactId="EBI-744302">
        <id>P14136</id>
        <label>GFAP</label>
    </interactant>
    <organismsDiffer>false</organismsDiffer>
    <experiments>3</experiments>
</comment>
<comment type="interaction">
    <interactant intactId="EBI-17178971">
        <id>Q14005-2</id>
    </interactant>
    <interactant intactId="EBI-25913156">
        <id>O14908-2</id>
        <label>GIPC1</label>
    </interactant>
    <organismsDiffer>false</organismsDiffer>
    <experiments>3</experiments>
</comment>
<comment type="interaction">
    <interactant intactId="EBI-17178971">
        <id>Q14005-2</id>
    </interactant>
    <interactant intactId="EBI-618309">
        <id>Q08379</id>
        <label>GOLGA2</label>
    </interactant>
    <organismsDiffer>false</organismsDiffer>
    <experiments>3</experiments>
</comment>
<comment type="interaction">
    <interactant intactId="EBI-17178971">
        <id>Q14005-2</id>
    </interactant>
    <interactant intactId="EBI-5916454">
        <id>A6NEM1</id>
        <label>GOLGA6L9</label>
    </interactant>
    <organismsDiffer>false</organismsDiffer>
    <experiments>3</experiments>
</comment>
<comment type="interaction">
    <interactant intactId="EBI-17178971">
        <id>Q14005-2</id>
    </interactant>
    <interactant intactId="EBI-747754">
        <id>P28799</id>
        <label>GRN</label>
    </interactant>
    <organismsDiffer>false</organismsDiffer>
    <experiments>3</experiments>
</comment>
<comment type="interaction">
    <interactant intactId="EBI-17178971">
        <id>Q14005-2</id>
    </interactant>
    <interactant intactId="EBI-10961706">
        <id>Q96ED9-2</id>
        <label>HOOK2</label>
    </interactant>
    <organismsDiffer>false</organismsDiffer>
    <experiments>3</experiments>
</comment>
<comment type="interaction">
    <interactant intactId="EBI-17178971">
        <id>Q14005-2</id>
    </interactant>
    <interactant intactId="EBI-7116203">
        <id>O75031</id>
        <label>HSF2BP</label>
    </interactant>
    <organismsDiffer>false</organismsDiffer>
    <experiments>3</experiments>
</comment>
<comment type="interaction">
    <interactant intactId="EBI-17178971">
        <id>Q14005-2</id>
    </interactant>
    <interactant intactId="EBI-352682">
        <id>P04792</id>
        <label>HSPB1</label>
    </interactant>
    <organismsDiffer>false</organismsDiffer>
    <experiments>3</experiments>
</comment>
<comment type="interaction">
    <interactant intactId="EBI-17178971">
        <id>Q14005-2</id>
    </interactant>
    <interactant intactId="EBI-466029">
        <id>P42858</id>
        <label>HTT</label>
    </interactant>
    <organismsDiffer>false</organismsDiffer>
    <experiments>15</experiments>
</comment>
<comment type="interaction">
    <interactant intactId="EBI-17178971">
        <id>Q14005-2</id>
    </interactant>
    <interactant intactId="EBI-2680803">
        <id>Q96N16</id>
        <label>JAKMIP1</label>
    </interactant>
    <organismsDiffer>false</organismsDiffer>
    <experiments>3</experiments>
</comment>
<comment type="interaction">
    <interactant intactId="EBI-17178971">
        <id>Q14005-2</id>
    </interactant>
    <interactant intactId="EBI-2556193">
        <id>Q63ZY3</id>
        <label>KANK2</label>
    </interactant>
    <organismsDiffer>false</organismsDiffer>
    <experiments>6</experiments>
</comment>
<comment type="interaction">
    <interactant intactId="EBI-17178971">
        <id>Q14005-2</id>
    </interactant>
    <interactant intactId="EBI-4397613">
        <id>Q7L273</id>
        <label>KCTD9</label>
    </interactant>
    <organismsDiffer>false</organismsDiffer>
    <experiments>3</experiments>
</comment>
<comment type="interaction">
    <interactant intactId="EBI-17178971">
        <id>Q14005-2</id>
    </interactant>
    <interactant intactId="EBI-10988217">
        <id>Q96L93-6</id>
        <label>KIF16B</label>
    </interactant>
    <organismsDiffer>false</organismsDiffer>
    <experiments>3</experiments>
</comment>
<comment type="interaction">
    <interactant intactId="EBI-17178971">
        <id>Q14005-2</id>
    </interactant>
    <interactant intactId="EBI-10975473">
        <id>O60333-2</id>
        <label>KIF1B</label>
    </interactant>
    <organismsDiffer>false</organismsDiffer>
    <experiments>3</experiments>
</comment>
<comment type="interaction">
    <interactant intactId="EBI-17178971">
        <id>Q14005-2</id>
    </interactant>
    <interactant intactId="EBI-14069005">
        <id>Q9BVG8-5</id>
        <label>KIFC3</label>
    </interactant>
    <organismsDiffer>false</organismsDiffer>
    <experiments>3</experiments>
</comment>
<comment type="interaction">
    <interactant intactId="EBI-17178971">
        <id>Q14005-2</id>
    </interactant>
    <interactant intactId="EBI-948266">
        <id>O14901</id>
        <label>KLF11</label>
    </interactant>
    <organismsDiffer>false</organismsDiffer>
    <experiments>3</experiments>
</comment>
<comment type="interaction">
    <interactant intactId="EBI-17178971">
        <id>Q14005-2</id>
    </interactant>
    <interactant intactId="EBI-2432309">
        <id>Q92876</id>
        <label>KLK6</label>
    </interactant>
    <organismsDiffer>false</organismsDiffer>
    <experiments>3</experiments>
</comment>
<comment type="interaction">
    <interactant intactId="EBI-17178971">
        <id>Q14005-2</id>
    </interactant>
    <interactant intactId="EBI-948001">
        <id>Q15323</id>
        <label>KRT31</label>
    </interactant>
    <organismsDiffer>false</organismsDiffer>
    <experiments>3</experiments>
</comment>
<comment type="interaction">
    <interactant intactId="EBI-17178971">
        <id>Q14005-2</id>
    </interactant>
    <interactant intactId="EBI-9996498">
        <id>O43790</id>
        <label>KRT86</label>
    </interactant>
    <organismsDiffer>false</organismsDiffer>
    <experiments>3</experiments>
</comment>
<comment type="interaction">
    <interactant intactId="EBI-17178971">
        <id>Q14005-2</id>
    </interactant>
    <interactant intactId="EBI-11959885">
        <id>Q07627</id>
        <label>KRTAP1-1</label>
    </interactant>
    <organismsDiffer>false</organismsDiffer>
    <experiments>4</experiments>
</comment>
<comment type="interaction">
    <interactant intactId="EBI-17178971">
        <id>Q14005-2</id>
    </interactant>
    <interactant intactId="EBI-11749135">
        <id>Q8IUG1</id>
        <label>KRTAP1-3</label>
    </interactant>
    <organismsDiffer>false</organismsDiffer>
    <experiments>3</experiments>
</comment>
<comment type="interaction">
    <interactant intactId="EBI-17178971">
        <id>Q14005-2</id>
    </interactant>
    <interactant intactId="EBI-10171774">
        <id>P60410</id>
        <label>KRTAP10-8</label>
    </interactant>
    <organismsDiffer>false</organismsDiffer>
    <experiments>3</experiments>
</comment>
<comment type="interaction">
    <interactant intactId="EBI-17178971">
        <id>Q14005-2</id>
    </interactant>
    <interactant intactId="EBI-9996449">
        <id>Q9BYR8</id>
        <label>KRTAP3-1</label>
    </interactant>
    <organismsDiffer>false</organismsDiffer>
    <experiments>3</experiments>
</comment>
<comment type="interaction">
    <interactant intactId="EBI-17178971">
        <id>Q14005-2</id>
    </interactant>
    <interactant intactId="EBI-11985629">
        <id>Q96JM7-2</id>
        <label>L3MBTL3</label>
    </interactant>
    <organismsDiffer>false</organismsDiffer>
    <experiments>3</experiments>
</comment>
<comment type="interaction">
    <interactant intactId="EBI-17178971">
        <id>Q14005-2</id>
    </interactant>
    <interactant intactId="EBI-10274069">
        <id>Q8TCE9</id>
        <label>LGALS14</label>
    </interactant>
    <organismsDiffer>false</organismsDiffer>
    <experiments>3</experiments>
</comment>
<comment type="interaction">
    <interactant intactId="EBI-17178971">
        <id>Q14005-2</id>
    </interactant>
    <interactant intactId="EBI-351935">
        <id>P02545</id>
        <label>LMNA</label>
    </interactant>
    <organismsDiffer>false</organismsDiffer>
    <experiments>3</experiments>
</comment>
<comment type="interaction">
    <interactant intactId="EBI-17178971">
        <id>Q14005-2</id>
    </interactant>
    <interactant intactId="EBI-11742507">
        <id>Q8TAP4-4</id>
        <label>LMO3</label>
    </interactant>
    <organismsDiffer>false</organismsDiffer>
    <experiments>3</experiments>
</comment>
<comment type="interaction">
    <interactant intactId="EBI-17178971">
        <id>Q14005-2</id>
    </interactant>
    <interactant intactId="EBI-739832">
        <id>Q8TBB1</id>
        <label>LNX1</label>
    </interactant>
    <organismsDiffer>false</organismsDiffer>
    <experiments>3</experiments>
</comment>
<comment type="interaction">
    <interactant intactId="EBI-17178971">
        <id>Q14005-2</id>
    </interactant>
    <interactant intactId="EBI-12516603">
        <id>Q8WWY6</id>
        <label>MBD3L1</label>
    </interactant>
    <organismsDiffer>false</organismsDiffer>
    <experiments>3</experiments>
</comment>
<comment type="interaction">
    <interactant intactId="EBI-17178971">
        <id>Q14005-2</id>
    </interactant>
    <interactant intactId="EBI-10172526">
        <id>Q9UJV3-2</id>
        <label>MID2</label>
    </interactant>
    <organismsDiffer>false</organismsDiffer>
    <experiments>6</experiments>
</comment>
<comment type="interaction">
    <interactant intactId="EBI-17178971">
        <id>Q14005-2</id>
    </interactant>
    <interactant intactId="EBI-3504938">
        <id>Q8N344</id>
        <label>MIER2</label>
    </interactant>
    <organismsDiffer>false</organismsDiffer>
    <experiments>5</experiments>
</comment>
<comment type="interaction">
    <interactant intactId="EBI-17178971">
        <id>Q14005-2</id>
    </interactant>
    <interactant intactId="EBI-11522433">
        <id>Q5JR59-3</id>
        <label>MTUS2</label>
    </interactant>
    <organismsDiffer>false</organismsDiffer>
    <experiments>3</experiments>
</comment>
<comment type="interaction">
    <interactant intactId="EBI-17178971">
        <id>Q14005-2</id>
    </interactant>
    <interactant intactId="EBI-3906629">
        <id>P15173</id>
        <label>MYOG</label>
    </interactant>
    <organismsDiffer>false</organismsDiffer>
    <experiments>3</experiments>
</comment>
<comment type="interaction">
    <interactant intactId="EBI-17178971">
        <id>Q14005-2</id>
    </interactant>
    <interactant intactId="EBI-475646">
        <id>P07196</id>
        <label>NEFL</label>
    </interactant>
    <organismsDiffer>false</organismsDiffer>
    <experiments>3</experiments>
</comment>
<comment type="interaction">
    <interactant intactId="EBI-17178971">
        <id>Q14005-2</id>
    </interactant>
    <interactant intactId="EBI-12025760">
        <id>Q86UR1-2</id>
        <label>NOXA1</label>
    </interactant>
    <organismsDiffer>false</organismsDiffer>
    <experiments>6</experiments>
</comment>
<comment type="interaction">
    <interactant intactId="EBI-17178971">
        <id>Q14005-2</id>
    </interactant>
    <interactant intactId="EBI-741158">
        <id>Q96HA8</id>
        <label>NTAQ1</label>
    </interactant>
    <organismsDiffer>false</organismsDiffer>
    <experiments>3</experiments>
</comment>
<comment type="interaction">
    <interactant intactId="EBI-17178971">
        <id>Q14005-2</id>
    </interactant>
    <interactant intactId="EBI-536879">
        <id>O43482</id>
        <label>OIP5</label>
    </interactant>
    <organismsDiffer>false</organismsDiffer>
    <experiments>3</experiments>
</comment>
<comment type="interaction">
    <interactant intactId="EBI-17178971">
        <id>Q14005-2</id>
    </interactant>
    <interactant intactId="EBI-350517">
        <id>Q9NR12</id>
        <label>PDLIM7</label>
    </interactant>
    <organismsDiffer>false</organismsDiffer>
    <experiments>3</experiments>
</comment>
<comment type="interaction">
    <interactant intactId="EBI-17178971">
        <id>Q14005-2</id>
    </interactant>
    <interactant intactId="EBI-357275">
        <id>Q99471</id>
        <label>PFDN5</label>
    </interactant>
    <organismsDiffer>false</organismsDiffer>
    <experiments>3</experiments>
</comment>
<comment type="interaction">
    <interactant intactId="EBI-17178971">
        <id>Q14005-2</id>
    </interactant>
    <interactant intactId="EBI-79165">
        <id>Q9NRD5</id>
        <label>PICK1</label>
    </interactant>
    <organismsDiffer>false</organismsDiffer>
    <experiments>3</experiments>
</comment>
<comment type="interaction">
    <interactant intactId="EBI-17178971">
        <id>Q14005-2</id>
    </interactant>
    <interactant intactId="EBI-50433196">
        <id>A0A6Q8PF08</id>
        <label>PMP22</label>
    </interactant>
    <organismsDiffer>false</organismsDiffer>
    <experiments>3</experiments>
</comment>
<comment type="interaction">
    <interactant intactId="EBI-17178971">
        <id>Q14005-2</id>
    </interactant>
    <interactant intactId="EBI-710402">
        <id>Q96I34</id>
        <label>PPP1R16A</label>
    </interactant>
    <organismsDiffer>false</organismsDiffer>
    <experiments>3</experiments>
</comment>
<comment type="interaction">
    <interactant intactId="EBI-17178971">
        <id>Q14005-2</id>
    </interactant>
    <interactant intactId="EBI-11320284">
        <id>Q9NQX0</id>
        <label>PRDM6</label>
    </interactant>
    <organismsDiffer>false</organismsDiffer>
    <experiments>3</experiments>
</comment>
<comment type="interaction">
    <interactant intactId="EBI-17178971">
        <id>Q14005-2</id>
    </interactant>
    <interactant intactId="EBI-749195">
        <id>P60891</id>
        <label>PRPS1</label>
    </interactant>
    <organismsDiffer>false</organismsDiffer>
    <experiments>3</experiments>
</comment>
<comment type="interaction">
    <interactant intactId="EBI-17178971">
        <id>Q14005-2</id>
    </interactant>
    <interactant intactId="EBI-740924">
        <id>Q9NZ81</id>
        <label>PRR13</label>
    </interactant>
    <organismsDiffer>false</organismsDiffer>
    <experiments>3</experiments>
</comment>
<comment type="interaction">
    <interactant intactId="EBI-17178971">
        <id>Q14005-2</id>
    </interactant>
    <interactant intactId="EBI-1050964">
        <id>O43586</id>
        <label>PSTPIP1</label>
    </interactant>
    <organismsDiffer>false</organismsDiffer>
    <experiments>3</experiments>
</comment>
<comment type="interaction">
    <interactant intactId="EBI-17178971">
        <id>Q14005-2</id>
    </interactant>
    <interactant intactId="EBI-12414415">
        <id>Q17RH5</id>
        <label>RAPGEF2</label>
    </interactant>
    <organismsDiffer>false</organismsDiffer>
    <experiments>3</experiments>
</comment>
<comment type="interaction">
    <interactant intactId="EBI-17178971">
        <id>Q14005-2</id>
    </interactant>
    <interactant intactId="EBI-2340624">
        <id>Q9BYM8</id>
        <label>RBCK1</label>
    </interactant>
    <organismsDiffer>false</organismsDiffer>
    <experiments>3</experiments>
</comment>
<comment type="interaction">
    <interactant intactId="EBI-17178971">
        <id>Q14005-2</id>
    </interactant>
    <interactant intactId="EBI-396669">
        <id>Q9Y3C5</id>
        <label>RNF11</label>
    </interactant>
    <organismsDiffer>false</organismsDiffer>
    <experiments>3</experiments>
</comment>
<comment type="interaction">
    <interactant intactId="EBI-17178971">
        <id>Q14005-2</id>
    </interactant>
    <interactant intactId="EBI-748621">
        <id>Q9UJW9</id>
        <label>SERTAD3</label>
    </interactant>
    <organismsDiffer>false</organismsDiffer>
    <experiments>3</experiments>
</comment>
<comment type="interaction">
    <interactant intactId="EBI-17178971">
        <id>Q14005-2</id>
    </interactant>
    <interactant intactId="EBI-358436">
        <id>Q12824-2</id>
        <label>SMARCB1</label>
    </interactant>
    <organismsDiffer>false</organismsDiffer>
    <experiments>3</experiments>
</comment>
<comment type="interaction">
    <interactant intactId="EBI-17178971">
        <id>Q14005-2</id>
    </interactant>
    <interactant intactId="EBI-12288855">
        <id>Q5JUK2</id>
        <label>SOHLH1</label>
    </interactant>
    <organismsDiffer>false</organismsDiffer>
    <experiments>3</experiments>
</comment>
<comment type="interaction">
    <interactant intactId="EBI-17178971">
        <id>Q14005-2</id>
    </interactant>
    <interactant intactId="EBI-5235340">
        <id>Q7Z699</id>
        <label>SPRED1</label>
    </interactant>
    <organismsDiffer>false</organismsDiffer>
    <experiments>6</experiments>
</comment>
<comment type="interaction">
    <interactant intactId="EBI-17178971">
        <id>Q14005-2</id>
    </interactant>
    <interactant intactId="EBI-11139477">
        <id>Q96N21</id>
        <label>TEPSIN</label>
    </interactant>
    <organismsDiffer>false</organismsDiffer>
    <experiments>3</experiments>
</comment>
<comment type="interaction">
    <interactant intactId="EBI-17178971">
        <id>Q14005-2</id>
    </interactant>
    <interactant intactId="EBI-1105213">
        <id>Q9UBB9</id>
        <label>TFIP11</label>
    </interactant>
    <organismsDiffer>false</organismsDiffer>
    <experiments>3</experiments>
</comment>
<comment type="interaction">
    <interactant intactId="EBI-17178971">
        <id>Q14005-2</id>
    </interactant>
    <interactant intactId="EBI-492476">
        <id>Q96RU7</id>
        <label>TRIB3</label>
    </interactant>
    <organismsDiffer>false</organismsDiffer>
    <experiments>3</experiments>
</comment>
<comment type="interaction">
    <interactant intactId="EBI-17178971">
        <id>Q14005-2</id>
    </interactant>
    <interactant intactId="EBI-740098">
        <id>P36406</id>
        <label>TRIM23</label>
    </interactant>
    <organismsDiffer>false</organismsDiffer>
    <experiments>3</experiments>
</comment>
<comment type="interaction">
    <interactant intactId="EBI-17178971">
        <id>Q14005-2</id>
    </interactant>
    <interactant intactId="EBI-719493">
        <id>P14373</id>
        <label>TRIM27</label>
    </interactant>
    <organismsDiffer>false</organismsDiffer>
    <experiments>3</experiments>
</comment>
<comment type="interaction">
    <interactant intactId="EBI-17178971">
        <id>Q14005-2</id>
    </interactant>
    <interactant intactId="EBI-5235829">
        <id>Q8IWZ5</id>
        <label>TRIM42</label>
    </interactant>
    <organismsDiffer>false</organismsDiffer>
    <experiments>3</experiments>
</comment>
<comment type="interaction">
    <interactant intactId="EBI-17178971">
        <id>Q14005-2</id>
    </interactant>
    <interactant intactId="EBI-11524408">
        <id>Q5T124-6</id>
        <label>UBXN11</label>
    </interactant>
    <organismsDiffer>false</organismsDiffer>
    <experiments>3</experiments>
</comment>
<comment type="interaction">
    <interactant intactId="EBI-17178971">
        <id>Q14005-2</id>
    </interactant>
    <interactant intactId="EBI-739895">
        <id>Q8N6Y0</id>
        <label>USHBP1</label>
    </interactant>
    <organismsDiffer>false</organismsDiffer>
    <experiments>3</experiments>
</comment>
<comment type="interaction">
    <interactant intactId="EBI-17178971">
        <id>Q14005-2</id>
    </interactant>
    <interactant intactId="EBI-720609">
        <id>O76024</id>
        <label>WFS1</label>
    </interactant>
    <organismsDiffer>false</organismsDiffer>
    <experiments>3</experiments>
</comment>
<comment type="interaction">
    <interactant intactId="EBI-17178971">
        <id>Q14005-2</id>
    </interactant>
    <interactant intactId="EBI-747743">
        <id>Q9GZV5</id>
        <label>WWTR1</label>
    </interactant>
    <organismsDiffer>false</organismsDiffer>
    <experiments>3</experiments>
</comment>
<comment type="interaction">
    <interactant intactId="EBI-17178971">
        <id>Q14005-2</id>
    </interactant>
    <interactant intactId="EBI-9995672">
        <id>O15060</id>
        <label>ZBTB39</label>
    </interactant>
    <organismsDiffer>false</organismsDiffer>
    <experiments>3</experiments>
</comment>
<comment type="interaction">
    <interactant intactId="EBI-17178971">
        <id>Q14005-2</id>
    </interactant>
    <interactant intactId="EBI-11962760">
        <id>Q9NZV7</id>
        <label>ZIM2</label>
    </interactant>
    <organismsDiffer>false</organismsDiffer>
    <experiments>3</experiments>
</comment>
<comment type="interaction">
    <interactant intactId="EBI-17178971">
        <id>Q14005-2</id>
    </interactant>
    <interactant intactId="EBI-2849334">
        <id>P52747</id>
        <label>ZNF143</label>
    </interactant>
    <organismsDiffer>false</organismsDiffer>
    <experiments>3</experiments>
</comment>
<comment type="interaction">
    <interactant intactId="EBI-17178971">
        <id>Q14005-2</id>
    </interactant>
    <interactant intactId="EBI-741694">
        <id>P49910</id>
        <label>ZNF165</label>
    </interactant>
    <organismsDiffer>false</organismsDiffer>
    <experiments>3</experiments>
</comment>
<comment type="interaction">
    <interactant intactId="EBI-17178971">
        <id>Q14005-2</id>
    </interactant>
    <interactant intactId="EBI-17269964">
        <id>Q6S9Z5</id>
        <label>ZNF474</label>
    </interactant>
    <organismsDiffer>false</organismsDiffer>
    <experiments>3</experiments>
</comment>
<comment type="interaction">
    <interactant intactId="EBI-17178971">
        <id>Q14005-2</id>
    </interactant>
    <interactant intactId="EBI-11035148">
        <id>Q8TF50</id>
        <label>ZNF526</label>
    </interactant>
    <organismsDiffer>false</organismsDiffer>
    <experiments>3</experiments>
</comment>
<comment type="interaction">
    <interactant intactId="EBI-17178971">
        <id>Q14005-2</id>
    </interactant>
    <interactant intactId="EBI-10172590">
        <id>Q7Z3I7</id>
        <label>ZNF572</label>
    </interactant>
    <organismsDiffer>false</organismsDiffer>
    <experiments>3</experiments>
</comment>
<comment type="interaction">
    <interactant intactId="EBI-17178971">
        <id>Q14005-2</id>
    </interactant>
    <interactant intactId="EBI-745520">
        <id>Q9P0T4</id>
        <label>ZNF581</label>
    </interactant>
    <organismsDiffer>false</organismsDiffer>
    <experiments>3</experiments>
</comment>
<comment type="interaction">
    <interactant intactId="EBI-17178971">
        <id>Q14005-2</id>
    </interactant>
    <interactant intactId="EBI-4395669">
        <id>Q6ZNG0</id>
        <label>ZNF620</label>
    </interactant>
    <organismsDiffer>false</organismsDiffer>
    <experiments>3</experiments>
</comment>
<comment type="interaction">
    <interactant intactId="EBI-17178971">
        <id>Q14005-2</id>
    </interactant>
    <interactant intactId="EBI-10251462">
        <id>Q6NX45</id>
        <label>ZNF774</label>
    </interactant>
    <organismsDiffer>false</organismsDiffer>
    <experiments>3</experiments>
</comment>
<comment type="interaction">
    <interactant intactId="EBI-17178971">
        <id>Q14005-2</id>
    </interactant>
    <interactant intactId="EBI-11975599">
        <id>Q9ULD5</id>
        <label>ZNF777</label>
    </interactant>
    <organismsDiffer>false</organismsDiffer>
    <experiments>6</experiments>
</comment>
<comment type="interaction">
    <interactant intactId="EBI-17178971">
        <id>Q14005-2</id>
    </interactant>
    <interactant intactId="EBI-5667516">
        <id>Q9Y2P0</id>
        <label>ZNF835</label>
    </interactant>
    <organismsDiffer>false</organismsDiffer>
    <experiments>3</experiments>
</comment>
<comment type="interaction">
    <interactant intactId="EBI-17178971">
        <id>Q14005-2</id>
    </interactant>
    <interactant intactId="EBI-527853">
        <id>Q9UGI0</id>
        <label>ZRANB1</label>
    </interactant>
    <organismsDiffer>false</organismsDiffer>
    <experiments>3</experiments>
</comment>
<comment type="subcellular location">
    <molecule>Interleukin-16</molecule>
    <subcellularLocation>
        <location>Secreted</location>
    </subcellularLocation>
</comment>
<comment type="subcellular location">
    <molecule>Isoform 1</molecule>
    <subcellularLocation>
        <location evidence="1">Cytoplasm</location>
    </subcellularLocation>
</comment>
<comment type="subcellular location">
    <molecule>Isoform 3</molecule>
    <subcellularLocation>
        <location>Cytoplasm</location>
    </subcellularLocation>
    <subcellularLocation>
        <location>Nucleus</location>
    </subcellularLocation>
</comment>
<comment type="alternative products">
    <event type="alternative promoter"/>
    <event type="alternative splicing"/>
    <isoform>
        <id>Q14005-1</id>
        <name>1</name>
        <name>nPro-IL-16</name>
        <sequence type="displayed"/>
    </isoform>
    <isoform>
        <id>Q14005-2</id>
        <name>2</name>
        <sequence type="described" ref="VSP_037459"/>
    </isoform>
    <isoform>
        <id>Q14005-3</id>
        <name>3</name>
        <name>Pro-IL-16</name>
        <sequence type="described" ref="VSP_037458"/>
    </isoform>
    <isoform>
        <id>Q14005-4</id>
        <name>4</name>
        <sequence type="described" ref="VSP_037458 VSP_037459 VSP_057192"/>
    </isoform>
</comment>
<comment type="tissue specificity">
    <molecule>Isoform 3</molecule>
    <text>Expressed in hemopoietic tissues, such as resting T-cells, but undetectable during active T-cell proliferation.</text>
</comment>
<comment type="induction">
    <molecule>Isoform 3</molecule>
    <text evidence="5">Down-regulated in T-cells after TCR activation.</text>
</comment>
<comment type="PTM">
    <molecule>Isoform 3</molecule>
    <text evidence="11">Synthesized as a chemo-attractant inactive precursor in hemopoietic tissues, and proteolytically cleaved by caspase-3 to yield IL-16.</text>
</comment>
<comment type="miscellaneous">
    <molecule>Isoform 1</molecule>
    <text>Produced by alternative promoter usage. Is probably proteolytically processed to yield IL-16.</text>
</comment>
<comment type="miscellaneous">
    <molecule>Isoform 2</molecule>
    <text evidence="17">Produced by alternative splicing of isoform 1. Is probably proteolytically processed to yield IL-16.</text>
</comment>
<comment type="miscellaneous">
    <molecule>Isoform 3</molecule>
    <text evidence="17">Produced by alternative promoter usage. Is proteolytically processed to yield IL-16.</text>
</comment>
<accession>Q14005</accession>
<accession>A6NM20</accession>
<accession>A8MU65</accession>
<accession>B5TY35</accession>
<accession>B9EGR6</accession>
<accession>H3BVH5</accession>
<accession>Q16435</accession>
<accession>Q6VVE6</accession>
<accession>Q6ZMQ7</accession>
<accession>Q9UP18</accession>
<reference key="1">
    <citation type="journal article" date="2003" name="J. Biol. Chem.">
        <title>PDZ domain-mediated interaction of interleukin-16 precursor proteins with myosin phosphatase targeting subunits.</title>
        <authorList>
            <person name="Bannert N."/>
            <person name="Vollhardt K."/>
            <person name="Asomuddinov B."/>
            <person name="Haag M."/>
            <person name="Koenig H."/>
            <person name="Norley S."/>
            <person name="Kurth R."/>
        </authorList>
    </citation>
    <scope>NUCLEOTIDE SEQUENCE [MRNA] (ISOFORM 1)</scope>
    <scope>INTERACTION WITH PPP1R12A; PPP1R12B; PPP1R12C AND GRIN2A</scope>
</reference>
<reference key="2">
    <citation type="journal article" date="2009" name="BMC Genomics">
        <title>Discovery of novel human transcript variants by analysis of intronic single-block EST with polyadenylation site.</title>
        <authorList>
            <person name="Wang P."/>
            <person name="Yu P."/>
            <person name="Gao P."/>
            <person name="Shi T."/>
            <person name="Ma D."/>
        </authorList>
    </citation>
    <scope>NUCLEOTIDE SEQUENCE [MRNA] (ISOFORM 4)</scope>
</reference>
<reference key="3">
    <citation type="submission" date="1999-01" db="EMBL/GenBank/DDBJ databases">
        <authorList>
            <person name="Kornfeld H."/>
        </authorList>
    </citation>
    <scope>NUCLEOTIDE SEQUENCE [MRNA] (ISOFORM 3)</scope>
    <source>
        <tissue>Peripheral blood</tissue>
    </source>
</reference>
<reference key="4">
    <citation type="journal article" date="2004" name="Nat. Genet.">
        <title>Complete sequencing and characterization of 21,243 full-length human cDNAs.</title>
        <authorList>
            <person name="Ota T."/>
            <person name="Suzuki Y."/>
            <person name="Nishikawa T."/>
            <person name="Otsuki T."/>
            <person name="Sugiyama T."/>
            <person name="Irie R."/>
            <person name="Wakamatsu A."/>
            <person name="Hayashi K."/>
            <person name="Sato H."/>
            <person name="Nagai K."/>
            <person name="Kimura K."/>
            <person name="Makita H."/>
            <person name="Sekine M."/>
            <person name="Obayashi M."/>
            <person name="Nishi T."/>
            <person name="Shibahara T."/>
            <person name="Tanaka T."/>
            <person name="Ishii S."/>
            <person name="Yamamoto J."/>
            <person name="Saito K."/>
            <person name="Kawai Y."/>
            <person name="Isono Y."/>
            <person name="Nakamura Y."/>
            <person name="Nagahari K."/>
            <person name="Murakami K."/>
            <person name="Yasuda T."/>
            <person name="Iwayanagi T."/>
            <person name="Wagatsuma M."/>
            <person name="Shiratori A."/>
            <person name="Sudo H."/>
            <person name="Hosoiri T."/>
            <person name="Kaku Y."/>
            <person name="Kodaira H."/>
            <person name="Kondo H."/>
            <person name="Sugawara M."/>
            <person name="Takahashi M."/>
            <person name="Kanda K."/>
            <person name="Yokoi T."/>
            <person name="Furuya T."/>
            <person name="Kikkawa E."/>
            <person name="Omura Y."/>
            <person name="Abe K."/>
            <person name="Kamihara K."/>
            <person name="Katsuta N."/>
            <person name="Sato K."/>
            <person name="Tanikawa M."/>
            <person name="Yamazaki M."/>
            <person name="Ninomiya K."/>
            <person name="Ishibashi T."/>
            <person name="Yamashita H."/>
            <person name="Murakawa K."/>
            <person name="Fujimori K."/>
            <person name="Tanai H."/>
            <person name="Kimata M."/>
            <person name="Watanabe M."/>
            <person name="Hiraoka S."/>
            <person name="Chiba Y."/>
            <person name="Ishida S."/>
            <person name="Ono Y."/>
            <person name="Takiguchi S."/>
            <person name="Watanabe S."/>
            <person name="Yosida M."/>
            <person name="Hotuta T."/>
            <person name="Kusano J."/>
            <person name="Kanehori K."/>
            <person name="Takahashi-Fujii A."/>
            <person name="Hara H."/>
            <person name="Tanase T.-O."/>
            <person name="Nomura Y."/>
            <person name="Togiya S."/>
            <person name="Komai F."/>
            <person name="Hara R."/>
            <person name="Takeuchi K."/>
            <person name="Arita M."/>
            <person name="Imose N."/>
            <person name="Musashino K."/>
            <person name="Yuuki H."/>
            <person name="Oshima A."/>
            <person name="Sasaki N."/>
            <person name="Aotsuka S."/>
            <person name="Yoshikawa Y."/>
            <person name="Matsunawa H."/>
            <person name="Ichihara T."/>
            <person name="Shiohata N."/>
            <person name="Sano S."/>
            <person name="Moriya S."/>
            <person name="Momiyama H."/>
            <person name="Satoh N."/>
            <person name="Takami S."/>
            <person name="Terashima Y."/>
            <person name="Suzuki O."/>
            <person name="Nakagawa S."/>
            <person name="Senoh A."/>
            <person name="Mizoguchi H."/>
            <person name="Goto Y."/>
            <person name="Shimizu F."/>
            <person name="Wakebe H."/>
            <person name="Hishigaki H."/>
            <person name="Watanabe T."/>
            <person name="Sugiyama A."/>
            <person name="Takemoto M."/>
            <person name="Kawakami B."/>
            <person name="Yamazaki M."/>
            <person name="Watanabe K."/>
            <person name="Kumagai A."/>
            <person name="Itakura S."/>
            <person name="Fukuzumi Y."/>
            <person name="Fujimori Y."/>
            <person name="Komiyama M."/>
            <person name="Tashiro H."/>
            <person name="Tanigami A."/>
            <person name="Fujiwara T."/>
            <person name="Ono T."/>
            <person name="Yamada K."/>
            <person name="Fujii Y."/>
            <person name="Ozaki K."/>
            <person name="Hirao M."/>
            <person name="Ohmori Y."/>
            <person name="Kawabata A."/>
            <person name="Hikiji T."/>
            <person name="Kobatake N."/>
            <person name="Inagaki H."/>
            <person name="Ikema Y."/>
            <person name="Okamoto S."/>
            <person name="Okitani R."/>
            <person name="Kawakami T."/>
            <person name="Noguchi S."/>
            <person name="Itoh T."/>
            <person name="Shigeta K."/>
            <person name="Senba T."/>
            <person name="Matsumura K."/>
            <person name="Nakajima Y."/>
            <person name="Mizuno T."/>
            <person name="Morinaga M."/>
            <person name="Sasaki M."/>
            <person name="Togashi T."/>
            <person name="Oyama M."/>
            <person name="Hata H."/>
            <person name="Watanabe M."/>
            <person name="Komatsu T."/>
            <person name="Mizushima-Sugano J."/>
            <person name="Satoh T."/>
            <person name="Shirai Y."/>
            <person name="Takahashi Y."/>
            <person name="Nakagawa K."/>
            <person name="Okumura K."/>
            <person name="Nagase T."/>
            <person name="Nomura N."/>
            <person name="Kikuchi H."/>
            <person name="Masuho Y."/>
            <person name="Yamashita R."/>
            <person name="Nakai K."/>
            <person name="Yada T."/>
            <person name="Nakamura Y."/>
            <person name="Ohara O."/>
            <person name="Isogai T."/>
            <person name="Sugano S."/>
        </authorList>
    </citation>
    <scope>NUCLEOTIDE SEQUENCE [LARGE SCALE MRNA] (ISOFORM 2)</scope>
    <source>
        <tissue>Cerebellum</tissue>
    </source>
</reference>
<reference key="5">
    <citation type="journal article" date="2006" name="Nature">
        <title>Analysis of the DNA sequence and duplication history of human chromosome 15.</title>
        <authorList>
            <person name="Zody M.C."/>
            <person name="Garber M."/>
            <person name="Sharpe T."/>
            <person name="Young S.K."/>
            <person name="Rowen L."/>
            <person name="O'Neill K."/>
            <person name="Whittaker C.A."/>
            <person name="Kamal M."/>
            <person name="Chang J.L."/>
            <person name="Cuomo C.A."/>
            <person name="Dewar K."/>
            <person name="FitzGerald M.G."/>
            <person name="Kodira C.D."/>
            <person name="Madan A."/>
            <person name="Qin S."/>
            <person name="Yang X."/>
            <person name="Abbasi N."/>
            <person name="Abouelleil A."/>
            <person name="Arachchi H.M."/>
            <person name="Baradarani L."/>
            <person name="Birditt B."/>
            <person name="Bloom S."/>
            <person name="Bloom T."/>
            <person name="Borowsky M.L."/>
            <person name="Burke J."/>
            <person name="Butler J."/>
            <person name="Cook A."/>
            <person name="DeArellano K."/>
            <person name="DeCaprio D."/>
            <person name="Dorris L. III"/>
            <person name="Dors M."/>
            <person name="Eichler E.E."/>
            <person name="Engels R."/>
            <person name="Fahey J."/>
            <person name="Fleetwood P."/>
            <person name="Friedman C."/>
            <person name="Gearin G."/>
            <person name="Hall J.L."/>
            <person name="Hensley G."/>
            <person name="Johnson E."/>
            <person name="Jones C."/>
            <person name="Kamat A."/>
            <person name="Kaur A."/>
            <person name="Locke D.P."/>
            <person name="Madan A."/>
            <person name="Munson G."/>
            <person name="Jaffe D.B."/>
            <person name="Lui A."/>
            <person name="Macdonald P."/>
            <person name="Mauceli E."/>
            <person name="Naylor J.W."/>
            <person name="Nesbitt R."/>
            <person name="Nicol R."/>
            <person name="O'Leary S.B."/>
            <person name="Ratcliffe A."/>
            <person name="Rounsley S."/>
            <person name="She X."/>
            <person name="Sneddon K.M.B."/>
            <person name="Stewart S."/>
            <person name="Sougnez C."/>
            <person name="Stone S.M."/>
            <person name="Topham K."/>
            <person name="Vincent D."/>
            <person name="Wang S."/>
            <person name="Zimmer A.R."/>
            <person name="Birren B.W."/>
            <person name="Hood L."/>
            <person name="Lander E.S."/>
            <person name="Nusbaum C."/>
        </authorList>
    </citation>
    <scope>NUCLEOTIDE SEQUENCE [LARGE SCALE GENOMIC DNA]</scope>
</reference>
<reference key="6">
    <citation type="journal article" date="2004" name="Genome Res.">
        <title>The status, quality, and expansion of the NIH full-length cDNA project: the Mammalian Gene Collection (MGC).</title>
        <authorList>
            <consortium name="The MGC Project Team"/>
        </authorList>
    </citation>
    <scope>NUCLEOTIDE SEQUENCE [LARGE SCALE MRNA] (ISOFORM 2)</scope>
    <source>
        <tissue>Testis</tissue>
    </source>
</reference>
<reference key="7">
    <citation type="journal article" date="1999" name="Proc. Natl. Acad. Sci. U.S.A.">
        <title>GA-binding protein factors, in concert with the coactivator CREB binding protein/p300, control the induction of the interleukin 16 promoter in T lymphocytes.</title>
        <authorList>
            <person name="Bannert N."/>
            <person name="Avots A."/>
            <person name="Baier M."/>
            <person name="Serfling E."/>
            <person name="Kurth R."/>
        </authorList>
    </citation>
    <scope>NUCLEOTIDE SEQUENCE [GENOMIC DNA] OF 685-1332</scope>
</reference>
<reference key="8">
    <citation type="submission" date="2003-12" db="EMBL/GenBank/DDBJ databases">
        <authorList>
            <consortium name="SeattleSNPs variation discovery resource"/>
        </authorList>
    </citation>
    <scope>NUCLEOTIDE SEQUENCE [GENOMIC DNA] OF 685-1332</scope>
    <scope>VARIANTS GLN-889; LEU-906 AND LYS-1147</scope>
</reference>
<reference key="9">
    <citation type="journal article" date="1996" name="Nature">
        <title>Interleukin-16 or not?</title>
        <authorList>
            <person name="Bannert N."/>
            <person name="Baier M."/>
            <person name="Werner A."/>
            <person name="Kurth R."/>
        </authorList>
    </citation>
    <scope>NUCLEOTIDE SEQUENCE [MRNA] OF 942-1332</scope>
</reference>
<reference key="10">
    <citation type="journal article" date="1994" name="Proc. Natl. Acad. Sci. U.S.A.">
        <title>Molecular and functional analysis of a lymphocyte chemoattractant factor: association of biologic function with CD4 expression.</title>
        <authorList>
            <person name="Cruikshank W.W."/>
            <person name="Center D.M."/>
            <person name="Nisar N."/>
            <person name="Wu M."/>
            <person name="Natke B.C."/>
            <person name="Theodore A.C."/>
            <person name="Kornfeld H."/>
        </authorList>
    </citation>
    <scope>NUCLEOTIDE SEQUENCE [MRNA] OF 1203-1332</scope>
    <scope>SUBUNIT</scope>
    <source>
        <tissue>Peripheral blood</tissue>
    </source>
</reference>
<reference key="11">
    <citation type="journal article" date="1999" name="Xi Bao Yu Fen Zi Mian Yi Xue Za Zhi">
        <title>Cloning, expression and purification of human interleukin-16.</title>
        <authorList>
            <person name="Du Y."/>
            <person name="Du G.X."/>
            <person name="Hou L.H."/>
            <person name="Wang H.T."/>
        </authorList>
    </citation>
    <scope>NUCLEOTIDE SEQUENCE [MRNA] OF 1203-1332</scope>
</reference>
<reference key="12">
    <citation type="journal article" date="1998" name="J. Biol. Chem.">
        <title>Processing and activation of pro-interleukin-16 by caspase-3.</title>
        <authorList>
            <person name="Zhang Y."/>
            <person name="Center D.M."/>
            <person name="Wu D.M."/>
            <person name="Cruikshank W.W."/>
            <person name="Yuan J."/>
            <person name="Andrews D.W."/>
            <person name="Kornfeld H."/>
        </authorList>
    </citation>
    <scope>PROTEIN SEQUENCE OF 1212-1220</scope>
    <scope>PROTEOLYTIC PROCESSING</scope>
    <scope>MUTAGENESIS OF ASP-1211</scope>
</reference>
<reference key="13">
    <citation type="journal article" date="2001" name="J. Biol. Chem.">
        <title>Nuclear translocation of the N-terminal prodomain of interleukin-16.</title>
        <authorList>
            <person name="Zhang Y."/>
            <person name="Kornfeld H."/>
            <person name="Cruikshank W.W."/>
            <person name="Kim S."/>
            <person name="Reardon C.C."/>
            <person name="Center D.M."/>
        </authorList>
    </citation>
    <scope>SUBCELLULAR LOCATION (PRO-INTERLEUKIN-16)</scope>
    <scope>MUTAGENESIS OF 780-LYS-LYS-781 AND 797-LYS--ARG-802</scope>
</reference>
<reference key="14">
    <citation type="journal article" date="2001" name="Nat. Immunol.">
        <title>Gene regulation mediated by calcium signals in T lymphocytes.</title>
        <authorList>
            <person name="Feske S."/>
            <person name="Giltnane J."/>
            <person name="Dolmetsch R."/>
            <person name="Staudt L.M."/>
            <person name="Rao A."/>
        </authorList>
    </citation>
    <scope>INDUCTION</scope>
</reference>
<reference key="15">
    <citation type="journal article" date="2002" name="Biochemistry">
        <title>Prointerleukin-16 contains a functional CcN motif that regulates nuclear localization.</title>
        <authorList>
            <person name="Wilson K.C."/>
            <person name="Cruikshank W.W."/>
            <person name="Center D.M."/>
            <person name="Zhang Y."/>
        </authorList>
    </citation>
    <scope>PHOSPHORYLATION</scope>
    <scope>MUTAGENESIS OF SER-743 AND THR-757</scope>
</reference>
<reference key="16">
    <citation type="journal article" date="2003" name="Virology">
        <title>Binding of HTLV-1 tax oncoprotein to the precursor of interleukin-16, a T cell PDZ domain-containing protein.</title>
        <authorList>
            <person name="Wilson K.C."/>
            <person name="Center D.M."/>
            <person name="Cruikshank W.W."/>
            <person name="Zhang Y."/>
        </authorList>
    </citation>
    <scope>INTERACTION WITH HTLV-1 TAX (MICROBIAL INFECTION)</scope>
    <scope>SUBCELLULAR LOCATION</scope>
</reference>
<reference key="17">
    <citation type="journal article" date="2004" name="J. Immunol.">
        <title>Nuclear pro-IL-16 regulation of T cell proliferation: p27(KIP1)-dependent G0/G1 arrest mediated by inhibition of Skp2 transcription.</title>
        <authorList>
            <person name="Center D.M."/>
            <person name="Cruikshank W.W."/>
            <person name="Zhang Y."/>
        </authorList>
    </citation>
    <scope>FUNCTION (PRO-INTERLEUKIN-16)</scope>
    <scope>SUBCELLULAR LOCATION</scope>
</reference>
<reference key="18">
    <citation type="journal article" date="2008" name="J. Immunol.">
        <title>Pro-IL-16 recruits histone deacetylase 3 to the Skp2 core promoter through interaction with transcription factor GABP.</title>
        <authorList>
            <person name="Zhang Y."/>
            <person name="Tuzova M."/>
            <person name="Xiao Z.X."/>
            <person name="Cruikshank W.W."/>
            <person name="Center D.M."/>
        </authorList>
    </citation>
    <scope>FUNCTION (PRO-INTERLEUKIN-16)</scope>
    <scope>SUBCELLULAR LOCATION (PRO-INTERLEUKIN-16)</scope>
    <scope>INTERACTION WITH GABPB1 AND HDAC3</scope>
</reference>
<reference key="19">
    <citation type="journal article" date="2011" name="BMC Syst. Biol.">
        <title>Initial characterization of the human central proteome.</title>
        <authorList>
            <person name="Burkard T.R."/>
            <person name="Planyavsky M."/>
            <person name="Kaupe I."/>
            <person name="Breitwieser F.P."/>
            <person name="Buerckstuemmer T."/>
            <person name="Bennett K.L."/>
            <person name="Superti-Furga G."/>
            <person name="Colinge J."/>
        </authorList>
    </citation>
    <scope>IDENTIFICATION BY MASS SPECTROMETRY [LARGE SCALE ANALYSIS]</scope>
</reference>
<reference key="20">
    <citation type="journal article" date="2014" name="J. Proteomics">
        <title>An enzyme assisted RP-RPLC approach for in-depth analysis of human liver phosphoproteome.</title>
        <authorList>
            <person name="Bian Y."/>
            <person name="Song C."/>
            <person name="Cheng K."/>
            <person name="Dong M."/>
            <person name="Wang F."/>
            <person name="Huang J."/>
            <person name="Sun D."/>
            <person name="Wang L."/>
            <person name="Ye M."/>
            <person name="Zou H."/>
        </authorList>
    </citation>
    <scope>PHOSPHORYLATION [LARGE SCALE ANALYSIS] AT SER-922</scope>
    <scope>IDENTIFICATION BY MASS SPECTROMETRY [LARGE SCALE ANALYSIS]</scope>
    <source>
        <tissue>Liver</tissue>
    </source>
</reference>
<reference key="21">
    <citation type="journal article" date="1998" name="Nat. Struct. Biol.">
        <title>Structure of interleukin 16 resembles a PDZ domain with an occluded peptide binding site.</title>
        <authorList>
            <person name="Muehlhahn P."/>
            <person name="Zweckstetter M."/>
            <person name="Georgescu J."/>
            <person name="Ciosto C."/>
            <person name="Renner C."/>
            <person name="Lanzendoerfer M."/>
            <person name="Lang K."/>
            <person name="Ambrosius D."/>
            <person name="Baier M."/>
            <person name="Kurth R."/>
            <person name="Holak T.A."/>
        </authorList>
    </citation>
    <scope>STRUCTURE BY NMR OF 1203-1332</scope>
</reference>
<reference key="22">
    <citation type="submission" date="2005-11" db="PDB data bank">
        <title>Solution structures of the PDZ domain of human interleukin-16.</title>
        <authorList>
            <consortium name="RIKEN structural genomics initiative (RSGI)"/>
        </authorList>
    </citation>
    <scope>STRUCTURE BY NMR OF 1103-1209</scope>
</reference>
<evidence type="ECO:0000250" key="1"/>
<evidence type="ECO:0000255" key="2">
    <source>
        <dbReference type="PROSITE-ProRule" id="PRU00143"/>
    </source>
</evidence>
<evidence type="ECO:0000256" key="3">
    <source>
        <dbReference type="SAM" id="MobiDB-lite"/>
    </source>
</evidence>
<evidence type="ECO:0000269" key="4">
    <source>
    </source>
</evidence>
<evidence type="ECO:0000269" key="5">
    <source>
    </source>
</evidence>
<evidence type="ECO:0000269" key="6">
    <source>
    </source>
</evidence>
<evidence type="ECO:0000269" key="7">
    <source>
    </source>
</evidence>
<evidence type="ECO:0000269" key="8">
    <source>
    </source>
</evidence>
<evidence type="ECO:0000269" key="9">
    <source>
    </source>
</evidence>
<evidence type="ECO:0000269" key="10">
    <source>
    </source>
</evidence>
<evidence type="ECO:0000269" key="11">
    <source>
    </source>
</evidence>
<evidence type="ECO:0000269" key="12">
    <source ref="8"/>
</evidence>
<evidence type="ECO:0000303" key="13">
    <source>
    </source>
</evidence>
<evidence type="ECO:0000303" key="14">
    <source>
    </source>
</evidence>
<evidence type="ECO:0000303" key="15">
    <source>
    </source>
</evidence>
<evidence type="ECO:0000303" key="16">
    <source ref="3"/>
</evidence>
<evidence type="ECO:0000305" key="17"/>
<evidence type="ECO:0007744" key="18">
    <source>
    </source>
</evidence>
<evidence type="ECO:0007829" key="19">
    <source>
        <dbReference type="PDB" id="1I16"/>
    </source>
</evidence>
<evidence type="ECO:0007829" key="20">
    <source>
        <dbReference type="PDB" id="1X6D"/>
    </source>
</evidence>
<evidence type="ECO:0007829" key="21">
    <source>
        <dbReference type="PDB" id="5FB8"/>
    </source>
</evidence>
<dbReference type="EMBL" id="AY324389">
    <property type="protein sequence ID" value="AAQ86961.1"/>
    <property type="molecule type" value="mRNA"/>
</dbReference>
<dbReference type="EMBL" id="FJ032370">
    <property type="protein sequence ID" value="ACI00236.1"/>
    <property type="molecule type" value="mRNA"/>
</dbReference>
<dbReference type="EMBL" id="M90391">
    <property type="protein sequence ID" value="AAD04636.1"/>
    <property type="molecule type" value="mRNA"/>
</dbReference>
<dbReference type="EMBL" id="AK131530">
    <property type="protein sequence ID" value="BAD18668.1"/>
    <property type="molecule type" value="mRNA"/>
</dbReference>
<dbReference type="EMBL" id="AC036196">
    <property type="status" value="NOT_ANNOTATED_CDS"/>
    <property type="molecule type" value="Genomic_DNA"/>
</dbReference>
<dbReference type="EMBL" id="AC103858">
    <property type="status" value="NOT_ANNOTATED_CDS"/>
    <property type="molecule type" value="Genomic_DNA"/>
</dbReference>
<dbReference type="EMBL" id="KF456108">
    <property type="status" value="NOT_ANNOTATED_CDS"/>
    <property type="molecule type" value="Genomic_DNA"/>
</dbReference>
<dbReference type="EMBL" id="BC136660">
    <property type="protein sequence ID" value="AAI36661.1"/>
    <property type="molecule type" value="mRNA"/>
</dbReference>
<dbReference type="EMBL" id="AF077011">
    <property type="protein sequence ID" value="AAD15990.1"/>
    <property type="molecule type" value="Genomic_DNA"/>
</dbReference>
<dbReference type="EMBL" id="AY497901">
    <property type="protein sequence ID" value="AAR89904.1"/>
    <property type="molecule type" value="Genomic_DNA"/>
</dbReference>
<dbReference type="EMBL" id="S81601">
    <property type="protein sequence ID" value="AAB36371.2"/>
    <property type="molecule type" value="mRNA"/>
</dbReference>
<dbReference type="EMBL" id="AF053412">
    <property type="protein sequence ID" value="AAC12732.1"/>
    <property type="molecule type" value="mRNA"/>
</dbReference>
<dbReference type="CCDS" id="CCDS10317.1">
    <molecule id="Q14005-3"/>
</dbReference>
<dbReference type="CCDS" id="CCDS42069.1">
    <molecule id="Q14005-1"/>
</dbReference>
<dbReference type="CCDS" id="CCDS53966.1">
    <molecule id="Q14005-2"/>
</dbReference>
<dbReference type="PIR" id="I59298">
    <property type="entry name" value="I59298"/>
</dbReference>
<dbReference type="RefSeq" id="NP_001165599.1">
    <molecule id="Q14005-2"/>
    <property type="nucleotide sequence ID" value="NM_001172128.2"/>
</dbReference>
<dbReference type="RefSeq" id="NP_004504.3">
    <molecule id="Q14005-3"/>
    <property type="nucleotide sequence ID" value="NM_004513.5"/>
</dbReference>
<dbReference type="RefSeq" id="NP_757366.2">
    <molecule id="Q14005-1"/>
    <property type="nucleotide sequence ID" value="NM_172217.5"/>
</dbReference>
<dbReference type="RefSeq" id="XP_005254403.1">
    <property type="nucleotide sequence ID" value="XM_005254346.4"/>
</dbReference>
<dbReference type="RefSeq" id="XP_011519822.1">
    <property type="nucleotide sequence ID" value="XM_011521520.2"/>
</dbReference>
<dbReference type="RefSeq" id="XP_016877630.1">
    <property type="nucleotide sequence ID" value="XM_017022141.1"/>
</dbReference>
<dbReference type="RefSeq" id="XP_016877631.1">
    <property type="nucleotide sequence ID" value="XM_017022142.1"/>
</dbReference>
<dbReference type="RefSeq" id="XP_047288409.1">
    <molecule id="Q14005-1"/>
    <property type="nucleotide sequence ID" value="XM_047432453.1"/>
</dbReference>
<dbReference type="RefSeq" id="XP_054233813.1">
    <molecule id="Q14005-1"/>
    <property type="nucleotide sequence ID" value="XM_054377838.1"/>
</dbReference>
<dbReference type="RefSeq" id="XP_054233814.1">
    <molecule id="Q14005-2"/>
    <property type="nucleotide sequence ID" value="XM_054377839.1"/>
</dbReference>
<dbReference type="RefSeq" id="XP_054233819.1">
    <molecule id="Q14005-1"/>
    <property type="nucleotide sequence ID" value="XM_054377844.1"/>
</dbReference>
<dbReference type="PDB" id="1I16">
    <property type="method" value="NMR"/>
    <property type="chains" value="A=1203-1332"/>
</dbReference>
<dbReference type="PDB" id="1X6D">
    <property type="method" value="NMR"/>
    <property type="chains" value="A=1103-1208"/>
</dbReference>
<dbReference type="PDB" id="5FB8">
    <property type="method" value="X-ray"/>
    <property type="resolution" value="2.07 A"/>
    <property type="chains" value="C=1224-1323"/>
</dbReference>
<dbReference type="PDBsum" id="1I16"/>
<dbReference type="PDBsum" id="1X6D"/>
<dbReference type="PDBsum" id="5FB8"/>
<dbReference type="SMR" id="Q14005"/>
<dbReference type="BioGRID" id="109816">
    <property type="interactions" value="112"/>
</dbReference>
<dbReference type="ComplexPortal" id="CPX-10161">
    <property type="entry name" value="Interleukin-16 receptor-ligand complex"/>
</dbReference>
<dbReference type="DIP" id="DIP-6006N"/>
<dbReference type="FunCoup" id="Q14005">
    <property type="interactions" value="516"/>
</dbReference>
<dbReference type="IntAct" id="Q14005">
    <property type="interactions" value="112"/>
</dbReference>
<dbReference type="MINT" id="Q14005"/>
<dbReference type="STRING" id="9606.ENSP00000302935"/>
<dbReference type="CarbonylDB" id="Q14005"/>
<dbReference type="GlyCosmos" id="Q14005">
    <property type="glycosylation" value="3 sites, 1 glycan"/>
</dbReference>
<dbReference type="GlyGen" id="Q14005">
    <property type="glycosylation" value="4 sites, 1 O-linked glycan (3 sites)"/>
</dbReference>
<dbReference type="iPTMnet" id="Q14005"/>
<dbReference type="PhosphoSitePlus" id="Q14005"/>
<dbReference type="BioMuta" id="IL16"/>
<dbReference type="DMDM" id="239938922"/>
<dbReference type="CPTAC" id="CPTAC-926"/>
<dbReference type="jPOST" id="Q14005"/>
<dbReference type="MassIVE" id="Q14005"/>
<dbReference type="PaxDb" id="9606-ENSP00000302935"/>
<dbReference type="PeptideAtlas" id="Q14005"/>
<dbReference type="ProteomicsDB" id="43219"/>
<dbReference type="ProteomicsDB" id="59788">
    <molecule id="Q14005-1"/>
</dbReference>
<dbReference type="ProteomicsDB" id="59789">
    <molecule id="Q14005-2"/>
</dbReference>
<dbReference type="ProteomicsDB" id="59790">
    <molecule id="Q14005-3"/>
</dbReference>
<dbReference type="ABCD" id="Q14005">
    <property type="antibodies" value="1 sequenced antibody"/>
</dbReference>
<dbReference type="Antibodypedia" id="3932">
    <property type="antibodies" value="781 antibodies from 46 providers"/>
</dbReference>
<dbReference type="CPTC" id="Q14005">
    <property type="antibodies" value="1 antibody"/>
</dbReference>
<dbReference type="DNASU" id="3603"/>
<dbReference type="Ensembl" id="ENST00000394652.6">
    <molecule id="Q14005-3"/>
    <property type="protein sequence ID" value="ENSP00000378147.2"/>
    <property type="gene ID" value="ENSG00000172349.19"/>
</dbReference>
<dbReference type="Ensembl" id="ENST00000394660.6">
    <molecule id="Q14005-2"/>
    <property type="protein sequence ID" value="ENSP00000378155.2"/>
    <property type="gene ID" value="ENSG00000172349.19"/>
</dbReference>
<dbReference type="Ensembl" id="ENST00000683961.1">
    <molecule id="Q14005-1"/>
    <property type="protein sequence ID" value="ENSP00000508085.1"/>
    <property type="gene ID" value="ENSG00000172349.19"/>
</dbReference>
<dbReference type="Ensembl" id="ENST00000706926.1">
    <molecule id="Q14005-2"/>
    <property type="protein sequence ID" value="ENSP00000516648.1"/>
    <property type="gene ID" value="ENSG00000172349.19"/>
</dbReference>
<dbReference type="GeneID" id="3603"/>
<dbReference type="KEGG" id="hsa:3603"/>
<dbReference type="MANE-Select" id="ENST00000683961.1">
    <property type="protein sequence ID" value="ENSP00000508085.1"/>
    <property type="RefSeq nucleotide sequence ID" value="NM_172217.5"/>
    <property type="RefSeq protein sequence ID" value="NP_757366.2"/>
</dbReference>
<dbReference type="UCSC" id="uc002bgg.4">
    <molecule id="Q14005-1"/>
    <property type="organism name" value="human"/>
</dbReference>
<dbReference type="AGR" id="HGNC:5980"/>
<dbReference type="CTD" id="3603"/>
<dbReference type="DisGeNET" id="3603"/>
<dbReference type="GeneCards" id="IL16"/>
<dbReference type="HGNC" id="HGNC:5980">
    <property type="gene designation" value="IL16"/>
</dbReference>
<dbReference type="HPA" id="ENSG00000172349">
    <property type="expression patterns" value="Tissue enhanced (brain, lymphoid tissue)"/>
</dbReference>
<dbReference type="MalaCards" id="IL16"/>
<dbReference type="MIM" id="603035">
    <property type="type" value="gene"/>
</dbReference>
<dbReference type="neXtProt" id="NX_Q14005"/>
<dbReference type="OpenTargets" id="ENSG00000172349"/>
<dbReference type="PharmGKB" id="PA29793"/>
<dbReference type="VEuPathDB" id="HostDB:ENSG00000172349"/>
<dbReference type="eggNOG" id="KOG3528">
    <property type="taxonomic scope" value="Eukaryota"/>
</dbReference>
<dbReference type="GeneTree" id="ENSGT00940000156178"/>
<dbReference type="HOGENOM" id="CLU_007677_0_0_1"/>
<dbReference type="InParanoid" id="Q14005"/>
<dbReference type="OMA" id="FFTKEAS"/>
<dbReference type="OrthoDB" id="42382at2759"/>
<dbReference type="PAN-GO" id="Q14005">
    <property type="GO annotations" value="4 GO annotations based on evolutionary models"/>
</dbReference>
<dbReference type="PhylomeDB" id="Q14005"/>
<dbReference type="TreeFam" id="TF326303"/>
<dbReference type="PathwayCommons" id="Q14005"/>
<dbReference type="Reactome" id="R-HSA-449836">
    <property type="pathway name" value="Other interleukin signaling"/>
</dbReference>
<dbReference type="SignaLink" id="Q14005"/>
<dbReference type="SIGNOR" id="Q14005"/>
<dbReference type="BioGRID-ORCS" id="3603">
    <property type="hits" value="10 hits in 1157 CRISPR screens"/>
</dbReference>
<dbReference type="ChiTaRS" id="IL16">
    <property type="organism name" value="human"/>
</dbReference>
<dbReference type="EvolutionaryTrace" id="Q14005"/>
<dbReference type="GeneWiki" id="Interleukin_16"/>
<dbReference type="GenomeRNAi" id="3603"/>
<dbReference type="Pharos" id="Q14005">
    <property type="development level" value="Tbio"/>
</dbReference>
<dbReference type="PRO" id="PR:Q14005"/>
<dbReference type="Proteomes" id="UP000005640">
    <property type="component" value="Chromosome 15"/>
</dbReference>
<dbReference type="RNAct" id="Q14005">
    <property type="molecule type" value="protein"/>
</dbReference>
<dbReference type="Bgee" id="ENSG00000172349">
    <property type="expression patterns" value="Expressed in granulocyte and 137 other cell types or tissues"/>
</dbReference>
<dbReference type="ExpressionAtlas" id="Q14005">
    <property type="expression patterns" value="baseline and differential"/>
</dbReference>
<dbReference type="GO" id="GO:0005829">
    <property type="term" value="C:cytosol"/>
    <property type="evidence" value="ECO:0000314"/>
    <property type="project" value="HPA"/>
</dbReference>
<dbReference type="GO" id="GO:0005576">
    <property type="term" value="C:extracellular region"/>
    <property type="evidence" value="ECO:0000304"/>
    <property type="project" value="Reactome"/>
</dbReference>
<dbReference type="GO" id="GO:0005615">
    <property type="term" value="C:extracellular space"/>
    <property type="evidence" value="ECO:0000304"/>
    <property type="project" value="ProtInc"/>
</dbReference>
<dbReference type="GO" id="GO:0090543">
    <property type="term" value="C:Flemming body"/>
    <property type="evidence" value="ECO:0000314"/>
    <property type="project" value="HPA"/>
</dbReference>
<dbReference type="GO" id="GO:0005925">
    <property type="term" value="C:focal adhesion"/>
    <property type="evidence" value="ECO:0000314"/>
    <property type="project" value="HPA"/>
</dbReference>
<dbReference type="GO" id="GO:0016607">
    <property type="term" value="C:nuclear speck"/>
    <property type="evidence" value="ECO:0000314"/>
    <property type="project" value="HPA"/>
</dbReference>
<dbReference type="GO" id="GO:0005886">
    <property type="term" value="C:plasma membrane"/>
    <property type="evidence" value="ECO:0000314"/>
    <property type="project" value="HPA"/>
</dbReference>
<dbReference type="GO" id="GO:0042609">
    <property type="term" value="F:CD4 receptor binding"/>
    <property type="evidence" value="ECO:0000353"/>
    <property type="project" value="CAFA"/>
</dbReference>
<dbReference type="GO" id="GO:0005125">
    <property type="term" value="F:cytokine activity"/>
    <property type="evidence" value="ECO:0000318"/>
    <property type="project" value="GO_Central"/>
</dbReference>
<dbReference type="GO" id="GO:0019221">
    <property type="term" value="P:cytokine-mediated signaling pathway"/>
    <property type="evidence" value="ECO:0000318"/>
    <property type="project" value="GO_Central"/>
</dbReference>
<dbReference type="GO" id="GO:0006955">
    <property type="term" value="P:immune response"/>
    <property type="evidence" value="ECO:0000304"/>
    <property type="project" value="ProtInc"/>
</dbReference>
<dbReference type="GO" id="GO:0050930">
    <property type="term" value="P:induction of positive chemotaxis"/>
    <property type="evidence" value="ECO:0007669"/>
    <property type="project" value="Ensembl"/>
</dbReference>
<dbReference type="GO" id="GO:0030595">
    <property type="term" value="P:leukocyte chemotaxis"/>
    <property type="evidence" value="ECO:0007669"/>
    <property type="project" value="Ensembl"/>
</dbReference>
<dbReference type="GO" id="GO:0050729">
    <property type="term" value="P:positive regulation of inflammatory response"/>
    <property type="evidence" value="ECO:0000314"/>
    <property type="project" value="ARUK-UCL"/>
</dbReference>
<dbReference type="GO" id="GO:0032730">
    <property type="term" value="P:positive regulation of interleukin-1 alpha production"/>
    <property type="evidence" value="ECO:0000314"/>
    <property type="project" value="ARUK-UCL"/>
</dbReference>
<dbReference type="GO" id="GO:0032735">
    <property type="term" value="P:positive regulation of interleukin-12 production"/>
    <property type="evidence" value="ECO:0000314"/>
    <property type="project" value="ARUK-UCL"/>
</dbReference>
<dbReference type="GO" id="GO:0032755">
    <property type="term" value="P:positive regulation of interleukin-6 production"/>
    <property type="evidence" value="ECO:0000314"/>
    <property type="project" value="ARUK-UCL"/>
</dbReference>
<dbReference type="GO" id="GO:0051924">
    <property type="term" value="P:regulation of calcium ion transport"/>
    <property type="evidence" value="ECO:0000314"/>
    <property type="project" value="CAFA"/>
</dbReference>
<dbReference type="CDD" id="cd06759">
    <property type="entry name" value="PDZ3_PDZD2-PDZ1_hPro-IL-16-like"/>
    <property type="match status" value="1"/>
</dbReference>
<dbReference type="CDD" id="cd06760">
    <property type="entry name" value="PDZ4_PDZD2-PDZ2_hPro-IL-16-like"/>
    <property type="match status" value="1"/>
</dbReference>
<dbReference type="CDD" id="cd06762">
    <property type="entry name" value="PDZ6_PDZD2-PDZ3_hPro-IL-16-like"/>
    <property type="match status" value="1"/>
</dbReference>
<dbReference type="CDD" id="cd06763">
    <property type="entry name" value="PDZ7_PDZD2-PDZ4_hPro-IL-16-like"/>
    <property type="match status" value="1"/>
</dbReference>
<dbReference type="FunFam" id="2.30.42.10:FF:000122">
    <property type="entry name" value="Pro-interleukin-16"/>
    <property type="match status" value="1"/>
</dbReference>
<dbReference type="FunFam" id="2.30.42.10:FF:000127">
    <property type="entry name" value="Pro-interleukin-16"/>
    <property type="match status" value="1"/>
</dbReference>
<dbReference type="FunFam" id="2.30.42.10:FF:000147">
    <property type="entry name" value="Pro-interleukin-16"/>
    <property type="match status" value="1"/>
</dbReference>
<dbReference type="FunFam" id="2.30.42.10:FF:000102">
    <property type="entry name" value="Putative pro-interleukin-16"/>
    <property type="match status" value="1"/>
</dbReference>
<dbReference type="Gene3D" id="2.30.42.10">
    <property type="match status" value="4"/>
</dbReference>
<dbReference type="InterPro" id="IPR020450">
    <property type="entry name" value="IL-16"/>
</dbReference>
<dbReference type="InterPro" id="IPR055287">
    <property type="entry name" value="IL-16-like"/>
</dbReference>
<dbReference type="InterPro" id="IPR001478">
    <property type="entry name" value="PDZ"/>
</dbReference>
<dbReference type="InterPro" id="IPR036034">
    <property type="entry name" value="PDZ_sf"/>
</dbReference>
<dbReference type="PANTHER" id="PTHR48484">
    <property type="entry name" value="PRO-INTERLEUKIN-16"/>
    <property type="match status" value="1"/>
</dbReference>
<dbReference type="PANTHER" id="PTHR48484:SF2">
    <property type="entry name" value="PRO-INTERLEUKIN-16"/>
    <property type="match status" value="1"/>
</dbReference>
<dbReference type="Pfam" id="PF00595">
    <property type="entry name" value="PDZ"/>
    <property type="match status" value="3"/>
</dbReference>
<dbReference type="PRINTS" id="PR01931">
    <property type="entry name" value="INTRLEUKIN16"/>
</dbReference>
<dbReference type="SMART" id="SM00228">
    <property type="entry name" value="PDZ"/>
    <property type="match status" value="4"/>
</dbReference>
<dbReference type="SUPFAM" id="SSF50156">
    <property type="entry name" value="PDZ domain-like"/>
    <property type="match status" value="4"/>
</dbReference>
<dbReference type="PROSITE" id="PS50106">
    <property type="entry name" value="PDZ"/>
    <property type="match status" value="4"/>
</dbReference>
<name>IL16_HUMAN</name>
<sequence>MESHSRAGKSRKSAKFRSISRSLMLCNAKTSDDGSSPDEKYPDPFEISLAQGKEGIFHSSVQLADTSEAGPSSVPDLALASEAAQLQAAGNDRGKTCRRIFFMKESSTASSREKPGKLEAQSSNFLFPKACHQRARSNSTSVNPYCTREIDFPMTKKSAAPTDRQPYSLCSNRKSLSQQLDCPAGKAAGTSRPTRSLSTAQLVQPSGGLQASVISNIVLMKGQAKGLGFSIVGGKDSIYGPIGIYVKTIFAGGAAAADGRLQEGDEILELNGESMAGLTHQDALQKFKQAKKGLLTLTVRTRLTAPPSLCSHLSPPLCRSLSSSTCITKDSSSFALESPSAPISTAKPNYRIMVEVSLQKEAGVGLGIGLCSVPYFQCISGIFVHTLSPGSVAHLDGRLRCGDEIVEISDSPVHCLTLNEVYTILSHCDPGPVPIIVSRHPDPQVSEQQLKEAVAQAVENTKFGKERHQWSLEGVKRLESSWHGRPTLEKEREKNSAPPHRRAQKVMIRSSSDSSYMSGSPGGSPGSGSAEKPSSDVDISTHSPSLPLAREPVVLSIASSRLPQESPPLPESRDSHPPLRLKKSFEILVRKPMSSKPKPPPRKYFKSDSDPQKSLEERENSSCSSGHTPPTCGQEARELLPLLLPQEDTAGRSPSASAGCPGPGIGPQTKSSTEGEPGWRRASPVTQTSPIKHPLLKRQARMDYSFDTTAEDPWVRISDCIKNLFSPIMSENHGHMPLQPNASLNEEEGTQGHPDGTPPKLDTANGTPKVYKSADSSTVKKGPPVAPKPAWFRQSLKGLRNRASDPRGLPDPALSTQPAPASREHLGSHIRASSSSSSIRQRISSFETFGSSQLPDKGAQRLSLQPSSGEAAKPLGKHEEGRFSGLLGRGAAPTLVPQQPEQVLSSGSPAASEARDPGVSESPPPGRQPNQKTLPPGPDPLLRLLSTQAEESQGPVLKMPSQRARSFPLTRSQSCETKLLDEKTSKLYSISSQVSSAVMKSLLCLPSSISCAQTPCIPKEGASPTSSSNEDSAANGSAETSALDTGFSLNLSELREYTEGLTEAKEDDDGDHSSLQSGQSVISLLSSEELKKLIEEVKVLDEATLKQLDGIHVTILHKEEGAGLGFSLAGGADLENKVITVHRVFPNGLASQEGTIQKGNEVLSINGKSLKGTTHHDALAILRQAREPRQAVIVTRKLTPEAMPDLNSSTDSAASASAASDVSVESTAEATVCTVTLEKMSAGLGFSLEGGKGSLHGDKPLTINRIFKGAASEQSETVQPGDEILQLGGTAMQGLTRFEAWNIIKALPDGPVTIVIRRKSLQSKETTAAGDS</sequence>